<evidence type="ECO:0000255" key="1">
    <source>
        <dbReference type="HAMAP-Rule" id="MF_01081"/>
    </source>
</evidence>
<keyword id="KW-0413">Isomerase</keyword>
<keyword id="KW-0819">tRNA processing</keyword>
<feature type="chain" id="PRO_1000084726" description="Probable tRNA pseudouridine synthase B">
    <location>
        <begin position="1"/>
        <end position="328"/>
    </location>
</feature>
<feature type="domain" description="PUA" evidence="1">
    <location>
        <begin position="238"/>
        <end position="313"/>
    </location>
</feature>
<feature type="active site" description="Nucleophile" evidence="1">
    <location>
        <position position="71"/>
    </location>
</feature>
<name>TRUB_PYRIL</name>
<protein>
    <recommendedName>
        <fullName evidence="1">Probable tRNA pseudouridine synthase B</fullName>
        <ecNumber evidence="1">5.4.99.25</ecNumber>
    </recommendedName>
    <alternativeName>
        <fullName evidence="1">tRNA pseudouridine(55) synthase</fullName>
        <shortName evidence="1">Psi55 synthase</shortName>
    </alternativeName>
    <alternativeName>
        <fullName evidence="1">tRNA pseudouridylate synthase</fullName>
    </alternativeName>
    <alternativeName>
        <fullName evidence="1">tRNA-uridine isomerase</fullName>
    </alternativeName>
</protein>
<comment type="function">
    <text evidence="1">Could be responsible for synthesis of pseudouridine from uracil-55 in the psi GC loop of transfer RNAs.</text>
</comment>
<comment type="catalytic activity">
    <reaction evidence="1">
        <text>uridine(55) in tRNA = pseudouridine(55) in tRNA</text>
        <dbReference type="Rhea" id="RHEA:42532"/>
        <dbReference type="Rhea" id="RHEA-COMP:10101"/>
        <dbReference type="Rhea" id="RHEA-COMP:10102"/>
        <dbReference type="ChEBI" id="CHEBI:65314"/>
        <dbReference type="ChEBI" id="CHEBI:65315"/>
        <dbReference type="EC" id="5.4.99.25"/>
    </reaction>
</comment>
<comment type="similarity">
    <text evidence="1">Belongs to the pseudouridine synthase TruB family. Type 2 subfamily.</text>
</comment>
<proteinExistence type="inferred from homology"/>
<sequence length="328" mass="37017">MKCGNREIFVKTQESTNPEWGKPPSKRTTEEYIRYSLVLIDKPRGPSSHEVAAWVKKILGVERAGHAGTLDPKVSGVLPIAVAEGTKALLALSRSDKVYVAVAKFHGDVDEEKLKAVLNEFQGVIYQKPPLRSSVKRQLRTRHVYSLELLELDGRYAVIKMHVEAGTYARKLIHDIGEVLGVGANMRELRRIAVSCYTEDETVALQDVADAYYIWRRYGDDTYLRRVLLPIEEIARHLPKIWVRDSAVDALCNGAPLAAPGVVKFETPFSKGELVAFFTLKDELIGFGRALVESEEAKKMERGLVARVDRVIMRRGTYPPMWKRKQQT</sequence>
<dbReference type="EC" id="5.4.99.25" evidence="1"/>
<dbReference type="EMBL" id="CP000504">
    <property type="protein sequence ID" value="ABL88299.1"/>
    <property type="molecule type" value="Genomic_DNA"/>
</dbReference>
<dbReference type="RefSeq" id="WP_011762874.1">
    <property type="nucleotide sequence ID" value="NC_008701.1"/>
</dbReference>
<dbReference type="SMR" id="A1RTL7"/>
<dbReference type="STRING" id="384616.Pisl_1128"/>
<dbReference type="GeneID" id="4618052"/>
<dbReference type="KEGG" id="pis:Pisl_1128"/>
<dbReference type="eggNOG" id="arCOG00987">
    <property type="taxonomic scope" value="Archaea"/>
</dbReference>
<dbReference type="HOGENOM" id="CLU_032087_3_0_2"/>
<dbReference type="OrthoDB" id="35866at2157"/>
<dbReference type="Proteomes" id="UP000002595">
    <property type="component" value="Chromosome"/>
</dbReference>
<dbReference type="GO" id="GO:0003723">
    <property type="term" value="F:RNA binding"/>
    <property type="evidence" value="ECO:0007669"/>
    <property type="project" value="InterPro"/>
</dbReference>
<dbReference type="GO" id="GO:0160148">
    <property type="term" value="F:tRNA pseudouridine(55) synthase activity"/>
    <property type="evidence" value="ECO:0007669"/>
    <property type="project" value="UniProtKB-EC"/>
</dbReference>
<dbReference type="GO" id="GO:0000495">
    <property type="term" value="P:box H/ACA sno(s)RNA 3'-end processing"/>
    <property type="evidence" value="ECO:0007669"/>
    <property type="project" value="TreeGrafter"/>
</dbReference>
<dbReference type="GO" id="GO:1990481">
    <property type="term" value="P:mRNA pseudouridine synthesis"/>
    <property type="evidence" value="ECO:0007669"/>
    <property type="project" value="TreeGrafter"/>
</dbReference>
<dbReference type="GO" id="GO:0031118">
    <property type="term" value="P:rRNA pseudouridine synthesis"/>
    <property type="evidence" value="ECO:0007669"/>
    <property type="project" value="TreeGrafter"/>
</dbReference>
<dbReference type="GO" id="GO:0031120">
    <property type="term" value="P:snRNA pseudouridine synthesis"/>
    <property type="evidence" value="ECO:0007669"/>
    <property type="project" value="TreeGrafter"/>
</dbReference>
<dbReference type="GO" id="GO:0031119">
    <property type="term" value="P:tRNA pseudouridine synthesis"/>
    <property type="evidence" value="ECO:0007669"/>
    <property type="project" value="UniProtKB-UniRule"/>
</dbReference>
<dbReference type="CDD" id="cd21148">
    <property type="entry name" value="PUA_Cbf5"/>
    <property type="match status" value="1"/>
</dbReference>
<dbReference type="FunFam" id="3.30.2350.10:FF:000001">
    <property type="entry name" value="H/ACA ribonucleoprotein complex subunit CBF5"/>
    <property type="match status" value="1"/>
</dbReference>
<dbReference type="Gene3D" id="3.30.2350.10">
    <property type="entry name" value="Pseudouridine synthase"/>
    <property type="match status" value="1"/>
</dbReference>
<dbReference type="Gene3D" id="2.30.130.10">
    <property type="entry name" value="PUA domain"/>
    <property type="match status" value="1"/>
</dbReference>
<dbReference type="HAMAP" id="MF_01081">
    <property type="entry name" value="TruB_arch"/>
    <property type="match status" value="1"/>
</dbReference>
<dbReference type="InterPro" id="IPR012960">
    <property type="entry name" value="Dyskerin-like"/>
</dbReference>
<dbReference type="InterPro" id="IPR020103">
    <property type="entry name" value="PsdUridine_synth_cat_dom_sf"/>
</dbReference>
<dbReference type="InterPro" id="IPR002501">
    <property type="entry name" value="PsdUridine_synth_N"/>
</dbReference>
<dbReference type="InterPro" id="IPR002478">
    <property type="entry name" value="PUA"/>
</dbReference>
<dbReference type="InterPro" id="IPR015947">
    <property type="entry name" value="PUA-like_sf"/>
</dbReference>
<dbReference type="InterPro" id="IPR036974">
    <property type="entry name" value="PUA_sf"/>
</dbReference>
<dbReference type="InterPro" id="IPR004802">
    <property type="entry name" value="tRNA_PsdUridine_synth_B_fam"/>
</dbReference>
<dbReference type="InterPro" id="IPR026326">
    <property type="entry name" value="TruB_arch"/>
</dbReference>
<dbReference type="InterPro" id="IPR032819">
    <property type="entry name" value="TruB_C"/>
</dbReference>
<dbReference type="InterPro" id="IPR004521">
    <property type="entry name" value="Uncharacterised_CHP00451"/>
</dbReference>
<dbReference type="NCBIfam" id="TIGR00425">
    <property type="entry name" value="CBF5"/>
    <property type="match status" value="1"/>
</dbReference>
<dbReference type="NCBIfam" id="NF003280">
    <property type="entry name" value="PRK04270.1"/>
    <property type="match status" value="1"/>
</dbReference>
<dbReference type="NCBIfam" id="TIGR00451">
    <property type="entry name" value="unchar_dom_2"/>
    <property type="match status" value="1"/>
</dbReference>
<dbReference type="PANTHER" id="PTHR23127">
    <property type="entry name" value="CENTROMERE/MICROTUBULE BINDING PROTEIN CBF5"/>
    <property type="match status" value="1"/>
</dbReference>
<dbReference type="PANTHER" id="PTHR23127:SF0">
    <property type="entry name" value="H_ACA RIBONUCLEOPROTEIN COMPLEX SUBUNIT DKC1"/>
    <property type="match status" value="1"/>
</dbReference>
<dbReference type="Pfam" id="PF08068">
    <property type="entry name" value="DKCLD"/>
    <property type="match status" value="1"/>
</dbReference>
<dbReference type="Pfam" id="PF01472">
    <property type="entry name" value="PUA"/>
    <property type="match status" value="1"/>
</dbReference>
<dbReference type="Pfam" id="PF16198">
    <property type="entry name" value="TruB_C_2"/>
    <property type="match status" value="1"/>
</dbReference>
<dbReference type="Pfam" id="PF01509">
    <property type="entry name" value="TruB_N"/>
    <property type="match status" value="1"/>
</dbReference>
<dbReference type="SMART" id="SM01136">
    <property type="entry name" value="DKCLD"/>
    <property type="match status" value="1"/>
</dbReference>
<dbReference type="SMART" id="SM00359">
    <property type="entry name" value="PUA"/>
    <property type="match status" value="1"/>
</dbReference>
<dbReference type="SUPFAM" id="SSF55120">
    <property type="entry name" value="Pseudouridine synthase"/>
    <property type="match status" value="1"/>
</dbReference>
<dbReference type="SUPFAM" id="SSF88697">
    <property type="entry name" value="PUA domain-like"/>
    <property type="match status" value="1"/>
</dbReference>
<dbReference type="PROSITE" id="PS50890">
    <property type="entry name" value="PUA"/>
    <property type="match status" value="1"/>
</dbReference>
<organism>
    <name type="scientific">Pyrobaculum islandicum (strain DSM 4184 / JCM 9189 / GEO3)</name>
    <dbReference type="NCBI Taxonomy" id="384616"/>
    <lineage>
        <taxon>Archaea</taxon>
        <taxon>Thermoproteota</taxon>
        <taxon>Thermoprotei</taxon>
        <taxon>Thermoproteales</taxon>
        <taxon>Thermoproteaceae</taxon>
        <taxon>Pyrobaculum</taxon>
    </lineage>
</organism>
<gene>
    <name evidence="1" type="primary">truB</name>
    <name type="ordered locus">Pisl_1128</name>
</gene>
<accession>A1RTL7</accession>
<reference key="1">
    <citation type="submission" date="2006-12" db="EMBL/GenBank/DDBJ databases">
        <title>Complete sequence of Pyrobaculum islandicum DSM 4184.</title>
        <authorList>
            <person name="Copeland A."/>
            <person name="Lucas S."/>
            <person name="Lapidus A."/>
            <person name="Barry K."/>
            <person name="Detter J.C."/>
            <person name="Glavina del Rio T."/>
            <person name="Dalin E."/>
            <person name="Tice H."/>
            <person name="Pitluck S."/>
            <person name="Meincke L."/>
            <person name="Brettin T."/>
            <person name="Bruce D."/>
            <person name="Han C."/>
            <person name="Tapia R."/>
            <person name="Gilna P."/>
            <person name="Schmutz J."/>
            <person name="Larimer F."/>
            <person name="Land M."/>
            <person name="Hauser L."/>
            <person name="Kyrpides N."/>
            <person name="Mikhailova N."/>
            <person name="Cozen A.E."/>
            <person name="Fitz-Gibbon S.T."/>
            <person name="House C.H."/>
            <person name="Saltikov C."/>
            <person name="Lowe T."/>
            <person name="Richardson P."/>
        </authorList>
    </citation>
    <scope>NUCLEOTIDE SEQUENCE [LARGE SCALE GENOMIC DNA]</scope>
    <source>
        <strain>DSM 4184 / JCM 9189 / GEO3</strain>
    </source>
</reference>